<keyword id="KW-0121">Carboxypeptidase</keyword>
<keyword id="KW-1015">Disulfide bond</keyword>
<keyword id="KW-0325">Glycoprotein</keyword>
<keyword id="KW-0378">Hydrolase</keyword>
<keyword id="KW-0645">Protease</keyword>
<keyword id="KW-1185">Reference proteome</keyword>
<keyword id="KW-0732">Signal</keyword>
<keyword id="KW-0926">Vacuole</keyword>
<keyword id="KW-0865">Zymogen</keyword>
<sequence length="541" mass="60888">MKVATSALLIGAAAAQQQQILKFPDSFSELKESSWTKPLQNLEESLKSLTGEARATWDEIAMMFPESFEKAAFFSEPKPHTRKQDSEWDHIIKGADIQSVWVENEKGEKEREIDGKLEQYSLRAKKVDPSVLGVDKVKQYSGYLDDEEEDKHLFYWFFESRNDPKNDPVVLWLNGGPGCSSLTGLFMELGPASITKDQKIKHNPYSWNSNASVIFLDQPVNVGYSYSSGSVSNTVAAGKDIYALLTLFFKQFPEYSHQSFHISGESYAGHYIPVFASEILSHKNRNINLQSVLIGNGLTDGLTQYEYYRPMACGEGGWPAVLDESQCKAMDNAYPRCASLIENCYNSESVWSCVPASIYCNNAMIGPYQRTGQNVYDVRKPCGSNSLCYDELDWIQGYLNKKEVMKAVGAEVSNYESCNFDINRNFLLQGDWMKPFHRVVPGILEKIPVLIYAGDADYICNWLGNKAWTEALEWPGAKAYNQAKMEDFKIDGDGKTVGQVKSSGNFTFMRLHAGGHMVPYDQPEASLEMLNRWLGGGFWKA</sequence>
<organism>
    <name type="scientific">Pyrenophora tritici-repentis (strain Pt-1C-BFP)</name>
    <name type="common">Wheat tan spot fungus</name>
    <name type="synonym">Drechslera tritici-repentis</name>
    <dbReference type="NCBI Taxonomy" id="426418"/>
    <lineage>
        <taxon>Eukaryota</taxon>
        <taxon>Fungi</taxon>
        <taxon>Dikarya</taxon>
        <taxon>Ascomycota</taxon>
        <taxon>Pezizomycotina</taxon>
        <taxon>Dothideomycetes</taxon>
        <taxon>Pleosporomycetidae</taxon>
        <taxon>Pleosporales</taxon>
        <taxon>Pleosporineae</taxon>
        <taxon>Pleosporaceae</taxon>
        <taxon>Pyrenophora</taxon>
    </lineage>
</organism>
<comment type="function">
    <text evidence="1">Vacuolar carboxypeptidase involved in degradation of small peptides. Digests preferentially peptides containing an aliphatic or hydrophobic residue in P1' position, as well as methionine, leucine or phenylalanine in P1 position of ester substrate (By similarity).</text>
</comment>
<comment type="catalytic activity">
    <reaction evidence="3">
        <text>Release of a C-terminal amino acid with broad specificity.</text>
        <dbReference type="EC" id="3.4.16.5"/>
    </reaction>
</comment>
<comment type="subcellular location">
    <subcellularLocation>
        <location evidence="1">Vacuole</location>
    </subcellularLocation>
</comment>
<comment type="similarity">
    <text evidence="4">Belongs to the peptidase S10 family.</text>
</comment>
<name>CBPYA_PYRTR</name>
<feature type="signal peptide" evidence="2">
    <location>
        <begin position="1"/>
        <end position="17"/>
    </location>
</feature>
<feature type="propeptide" id="PRO_0000407474" evidence="1">
    <location>
        <begin position="18"/>
        <end position="125"/>
    </location>
</feature>
<feature type="chain" id="PRO_0000407475" description="Carboxypeptidase Y homolog A">
    <location>
        <begin position="126"/>
        <end position="541"/>
    </location>
</feature>
<feature type="active site" evidence="3">
    <location>
        <position position="266"/>
    </location>
</feature>
<feature type="active site" evidence="3">
    <location>
        <position position="457"/>
    </location>
</feature>
<feature type="active site" evidence="3">
    <location>
        <position position="516"/>
    </location>
</feature>
<feature type="glycosylation site" description="N-linked (GlcNAc...) asparagine" evidence="2">
    <location>
        <position position="210"/>
    </location>
</feature>
<feature type="glycosylation site" description="N-linked (GlcNAc...) asparagine" evidence="2">
    <location>
        <position position="505"/>
    </location>
</feature>
<feature type="disulfide bond" evidence="1">
    <location>
        <begin position="179"/>
        <end position="418"/>
    </location>
</feature>
<feature type="disulfide bond" evidence="1">
    <location>
        <begin position="313"/>
        <end position="327"/>
    </location>
</feature>
<feature type="disulfide bond" evidence="1">
    <location>
        <begin position="337"/>
        <end position="360"/>
    </location>
</feature>
<feature type="disulfide bond" evidence="1">
    <location>
        <begin position="344"/>
        <end position="353"/>
    </location>
</feature>
<feature type="disulfide bond" evidence="1">
    <location>
        <begin position="382"/>
        <end position="388"/>
    </location>
</feature>
<protein>
    <recommendedName>
        <fullName>Carboxypeptidase Y homolog A</fullName>
        <ecNumber>3.4.16.5</ecNumber>
    </recommendedName>
</protein>
<proteinExistence type="inferred from homology"/>
<accession>B2WKF1</accession>
<reference key="1">
    <citation type="journal article" date="2013" name="G3 (Bethesda)">
        <title>Comparative genomics of a plant-pathogenic fungus, Pyrenophora tritici-repentis, reveals transduplication and the impact of repeat elements on pathogenicity and population divergence.</title>
        <authorList>
            <person name="Manning V.A."/>
            <person name="Pandelova I."/>
            <person name="Dhillon B."/>
            <person name="Wilhelm L.J."/>
            <person name="Goodwin S.B."/>
            <person name="Berlin A.M."/>
            <person name="Figueroa M."/>
            <person name="Freitag M."/>
            <person name="Hane J.K."/>
            <person name="Henrissat B."/>
            <person name="Holman W.H."/>
            <person name="Kodira C.D."/>
            <person name="Martin J."/>
            <person name="Oliver R.P."/>
            <person name="Robbertse B."/>
            <person name="Schackwitz W."/>
            <person name="Schwartz D.C."/>
            <person name="Spatafora J.W."/>
            <person name="Turgeon B.G."/>
            <person name="Yandava C."/>
            <person name="Young S."/>
            <person name="Zhou S."/>
            <person name="Zeng Q."/>
            <person name="Grigoriev I.V."/>
            <person name="Ma L.-J."/>
            <person name="Ciuffetti L.M."/>
        </authorList>
    </citation>
    <scope>NUCLEOTIDE SEQUENCE [LARGE SCALE GENOMIC DNA]</scope>
    <source>
        <strain>Pt-1C-BFP</strain>
    </source>
</reference>
<gene>
    <name type="primary">cpyA</name>
    <name type="ORF">PTRG_10461</name>
</gene>
<evidence type="ECO:0000250" key="1"/>
<evidence type="ECO:0000255" key="2"/>
<evidence type="ECO:0000255" key="3">
    <source>
        <dbReference type="PROSITE-ProRule" id="PRU10074"/>
    </source>
</evidence>
<evidence type="ECO:0000305" key="4"/>
<dbReference type="EC" id="3.4.16.5"/>
<dbReference type="EMBL" id="DS231628">
    <property type="protein sequence ID" value="EDU43511.1"/>
    <property type="molecule type" value="Genomic_DNA"/>
</dbReference>
<dbReference type="RefSeq" id="XP_001940792.1">
    <property type="nucleotide sequence ID" value="XM_001940757.1"/>
</dbReference>
<dbReference type="SMR" id="B2WKF1"/>
<dbReference type="FunCoup" id="B2WKF1">
    <property type="interactions" value="837"/>
</dbReference>
<dbReference type="STRING" id="426418.B2WKF1"/>
<dbReference type="ESTHER" id="pyrtr-cbpya">
    <property type="family name" value="Carboxypeptidase_S10"/>
</dbReference>
<dbReference type="MEROPS" id="S10.001"/>
<dbReference type="GlyCosmos" id="B2WKF1">
    <property type="glycosylation" value="2 sites, No reported glycans"/>
</dbReference>
<dbReference type="EnsemblFungi" id="EDU43511">
    <property type="protein sequence ID" value="EDU43511"/>
    <property type="gene ID" value="PTRG_10461"/>
</dbReference>
<dbReference type="GeneID" id="6348766"/>
<dbReference type="KEGG" id="ptrr:6348766"/>
<dbReference type="eggNOG" id="KOG1282">
    <property type="taxonomic scope" value="Eukaryota"/>
</dbReference>
<dbReference type="HOGENOM" id="CLU_008523_10_4_1"/>
<dbReference type="InParanoid" id="B2WKF1"/>
<dbReference type="OMA" id="GDWMKPF"/>
<dbReference type="OrthoDB" id="4777at28556"/>
<dbReference type="Proteomes" id="UP000001471">
    <property type="component" value="Unassembled WGS sequence"/>
</dbReference>
<dbReference type="GO" id="GO:0000324">
    <property type="term" value="C:fungal-type vacuole"/>
    <property type="evidence" value="ECO:0007669"/>
    <property type="project" value="TreeGrafter"/>
</dbReference>
<dbReference type="GO" id="GO:0004185">
    <property type="term" value="F:serine-type carboxypeptidase activity"/>
    <property type="evidence" value="ECO:0007669"/>
    <property type="project" value="UniProtKB-EC"/>
</dbReference>
<dbReference type="GO" id="GO:0006508">
    <property type="term" value="P:proteolysis"/>
    <property type="evidence" value="ECO:0007669"/>
    <property type="project" value="UniProtKB-KW"/>
</dbReference>
<dbReference type="FunFam" id="1.10.287.410:FF:000001">
    <property type="entry name" value="Carboxypeptidase Y"/>
    <property type="match status" value="1"/>
</dbReference>
<dbReference type="Gene3D" id="1.10.287.410">
    <property type="match status" value="1"/>
</dbReference>
<dbReference type="Gene3D" id="3.40.50.1820">
    <property type="entry name" value="alpha/beta hydrolase"/>
    <property type="match status" value="1"/>
</dbReference>
<dbReference type="InterPro" id="IPR029058">
    <property type="entry name" value="AB_hydrolase_fold"/>
</dbReference>
<dbReference type="InterPro" id="IPR001563">
    <property type="entry name" value="Peptidase_S10"/>
</dbReference>
<dbReference type="InterPro" id="IPR008442">
    <property type="entry name" value="Propeptide_carboxypepY"/>
</dbReference>
<dbReference type="InterPro" id="IPR018202">
    <property type="entry name" value="Ser_caboxypep_ser_AS"/>
</dbReference>
<dbReference type="PANTHER" id="PTHR11802:SF113">
    <property type="entry name" value="SERINE CARBOXYPEPTIDASE CTSA-4.1"/>
    <property type="match status" value="1"/>
</dbReference>
<dbReference type="PANTHER" id="PTHR11802">
    <property type="entry name" value="SERINE PROTEASE FAMILY S10 SERINE CARBOXYPEPTIDASE"/>
    <property type="match status" value="1"/>
</dbReference>
<dbReference type="Pfam" id="PF05388">
    <property type="entry name" value="Carbpep_Y_N"/>
    <property type="match status" value="1"/>
</dbReference>
<dbReference type="Pfam" id="PF00450">
    <property type="entry name" value="Peptidase_S10"/>
    <property type="match status" value="1"/>
</dbReference>
<dbReference type="PRINTS" id="PR00724">
    <property type="entry name" value="CRBOXYPTASEC"/>
</dbReference>
<dbReference type="SUPFAM" id="SSF53474">
    <property type="entry name" value="alpha/beta-Hydrolases"/>
    <property type="match status" value="1"/>
</dbReference>
<dbReference type="PROSITE" id="PS00131">
    <property type="entry name" value="CARBOXYPEPT_SER_SER"/>
    <property type="match status" value="1"/>
</dbReference>